<accession>Q3SG64</accession>
<comment type="function">
    <text evidence="1">Specifically methylates the pseudouridine at position 1915 (m3Psi1915) in 23S rRNA.</text>
</comment>
<comment type="catalytic activity">
    <reaction evidence="1">
        <text>pseudouridine(1915) in 23S rRNA + S-adenosyl-L-methionine = N(3)-methylpseudouridine(1915) in 23S rRNA + S-adenosyl-L-homocysteine + H(+)</text>
        <dbReference type="Rhea" id="RHEA:42752"/>
        <dbReference type="Rhea" id="RHEA-COMP:10221"/>
        <dbReference type="Rhea" id="RHEA-COMP:10222"/>
        <dbReference type="ChEBI" id="CHEBI:15378"/>
        <dbReference type="ChEBI" id="CHEBI:57856"/>
        <dbReference type="ChEBI" id="CHEBI:59789"/>
        <dbReference type="ChEBI" id="CHEBI:65314"/>
        <dbReference type="ChEBI" id="CHEBI:74486"/>
        <dbReference type="EC" id="2.1.1.177"/>
    </reaction>
</comment>
<comment type="subunit">
    <text evidence="1">Homodimer.</text>
</comment>
<comment type="subcellular location">
    <subcellularLocation>
        <location evidence="1">Cytoplasm</location>
    </subcellularLocation>
</comment>
<comment type="similarity">
    <text evidence="1">Belongs to the RNA methyltransferase RlmH family.</text>
</comment>
<comment type="sequence caution" evidence="2">
    <conflict type="erroneous initiation">
        <sequence resource="EMBL-CDS" id="AAZ98392"/>
    </conflict>
</comment>
<protein>
    <recommendedName>
        <fullName evidence="1">Ribosomal RNA large subunit methyltransferase H</fullName>
        <ecNumber evidence="1">2.1.1.177</ecNumber>
    </recommendedName>
    <alternativeName>
        <fullName evidence="1">23S rRNA (pseudouridine1915-N3)-methyltransferase</fullName>
    </alternativeName>
    <alternativeName>
        <fullName evidence="1">23S rRNA m3Psi1915 methyltransferase</fullName>
    </alternativeName>
    <alternativeName>
        <fullName evidence="1">rRNA (pseudouridine-N3-)-methyltransferase RlmH</fullName>
    </alternativeName>
</protein>
<gene>
    <name evidence="1" type="primary">rlmH</name>
    <name type="ordered locus">Tbd_2439</name>
</gene>
<keyword id="KW-0963">Cytoplasm</keyword>
<keyword id="KW-0489">Methyltransferase</keyword>
<keyword id="KW-1185">Reference proteome</keyword>
<keyword id="KW-0698">rRNA processing</keyword>
<keyword id="KW-0949">S-adenosyl-L-methionine</keyword>
<keyword id="KW-0808">Transferase</keyword>
<evidence type="ECO:0000255" key="1">
    <source>
        <dbReference type="HAMAP-Rule" id="MF_00658"/>
    </source>
</evidence>
<evidence type="ECO:0000305" key="2"/>
<feature type="chain" id="PRO_0000260626" description="Ribosomal RNA large subunit methyltransferase H">
    <location>
        <begin position="1"/>
        <end position="156"/>
    </location>
</feature>
<feature type="binding site" evidence="1">
    <location>
        <position position="73"/>
    </location>
    <ligand>
        <name>S-adenosyl-L-methionine</name>
        <dbReference type="ChEBI" id="CHEBI:59789"/>
    </ligand>
</feature>
<feature type="binding site" evidence="1">
    <location>
        <position position="104"/>
    </location>
    <ligand>
        <name>S-adenosyl-L-methionine</name>
        <dbReference type="ChEBI" id="CHEBI:59789"/>
    </ligand>
</feature>
<feature type="binding site" evidence="1">
    <location>
        <begin position="123"/>
        <end position="128"/>
    </location>
    <ligand>
        <name>S-adenosyl-L-methionine</name>
        <dbReference type="ChEBI" id="CHEBI:59789"/>
    </ligand>
</feature>
<dbReference type="EC" id="2.1.1.177" evidence="1"/>
<dbReference type="EMBL" id="CP000116">
    <property type="protein sequence ID" value="AAZ98392.1"/>
    <property type="status" value="ALT_INIT"/>
    <property type="molecule type" value="Genomic_DNA"/>
</dbReference>
<dbReference type="RefSeq" id="WP_041432758.1">
    <property type="nucleotide sequence ID" value="NC_007404.1"/>
</dbReference>
<dbReference type="SMR" id="Q3SG64"/>
<dbReference type="STRING" id="292415.Tbd_2439"/>
<dbReference type="KEGG" id="tbd:Tbd_2439"/>
<dbReference type="eggNOG" id="COG1576">
    <property type="taxonomic scope" value="Bacteria"/>
</dbReference>
<dbReference type="HOGENOM" id="CLU_100552_1_0_4"/>
<dbReference type="OrthoDB" id="9806643at2"/>
<dbReference type="Proteomes" id="UP000008291">
    <property type="component" value="Chromosome"/>
</dbReference>
<dbReference type="GO" id="GO:0005737">
    <property type="term" value="C:cytoplasm"/>
    <property type="evidence" value="ECO:0007669"/>
    <property type="project" value="UniProtKB-SubCell"/>
</dbReference>
<dbReference type="GO" id="GO:0070038">
    <property type="term" value="F:rRNA (pseudouridine-N3-)-methyltransferase activity"/>
    <property type="evidence" value="ECO:0007669"/>
    <property type="project" value="UniProtKB-UniRule"/>
</dbReference>
<dbReference type="CDD" id="cd18081">
    <property type="entry name" value="RlmH-like"/>
    <property type="match status" value="1"/>
</dbReference>
<dbReference type="Gene3D" id="3.40.1280.10">
    <property type="match status" value="1"/>
</dbReference>
<dbReference type="HAMAP" id="MF_00658">
    <property type="entry name" value="23SrRNA_methyltr_H"/>
    <property type="match status" value="1"/>
</dbReference>
<dbReference type="InterPro" id="IPR029028">
    <property type="entry name" value="Alpha/beta_knot_MTases"/>
</dbReference>
<dbReference type="InterPro" id="IPR003742">
    <property type="entry name" value="RlmH-like"/>
</dbReference>
<dbReference type="InterPro" id="IPR029026">
    <property type="entry name" value="tRNA_m1G_MTases_N"/>
</dbReference>
<dbReference type="NCBIfam" id="NF000986">
    <property type="entry name" value="PRK00103.1-4"/>
    <property type="match status" value="1"/>
</dbReference>
<dbReference type="PANTHER" id="PTHR33603">
    <property type="entry name" value="METHYLTRANSFERASE"/>
    <property type="match status" value="1"/>
</dbReference>
<dbReference type="PANTHER" id="PTHR33603:SF1">
    <property type="entry name" value="RIBOSOMAL RNA LARGE SUBUNIT METHYLTRANSFERASE H"/>
    <property type="match status" value="1"/>
</dbReference>
<dbReference type="Pfam" id="PF02590">
    <property type="entry name" value="SPOUT_MTase"/>
    <property type="match status" value="1"/>
</dbReference>
<dbReference type="PIRSF" id="PIRSF004505">
    <property type="entry name" value="MT_bac"/>
    <property type="match status" value="1"/>
</dbReference>
<dbReference type="SUPFAM" id="SSF75217">
    <property type="entry name" value="alpha/beta knot"/>
    <property type="match status" value="1"/>
</dbReference>
<sequence>MKLQLIAVGHKMPDWINAGYADYVRRMPGDLQLALTEIKPGHRVAGADGARARQLEAARILAAITPGAVRVVLDERGTQATTRELAGWLENWMGEGLTPAFVIGGADGLDDSVKAGAGKLFGLSRLTLPHALARVILAEQLYRAACIIKGHPYHRD</sequence>
<organism>
    <name type="scientific">Thiobacillus denitrificans (strain ATCC 25259 / T1)</name>
    <dbReference type="NCBI Taxonomy" id="292415"/>
    <lineage>
        <taxon>Bacteria</taxon>
        <taxon>Pseudomonadati</taxon>
        <taxon>Pseudomonadota</taxon>
        <taxon>Betaproteobacteria</taxon>
        <taxon>Nitrosomonadales</taxon>
        <taxon>Thiobacillaceae</taxon>
        <taxon>Thiobacillus</taxon>
    </lineage>
</organism>
<reference key="1">
    <citation type="journal article" date="2006" name="J. Bacteriol.">
        <title>The genome sequence of the obligately chemolithoautotrophic, facultatively anaerobic bacterium Thiobacillus denitrificans.</title>
        <authorList>
            <person name="Beller H.R."/>
            <person name="Chain P.S."/>
            <person name="Letain T.E."/>
            <person name="Chakicherla A."/>
            <person name="Larimer F.W."/>
            <person name="Richardson P.M."/>
            <person name="Coleman M.A."/>
            <person name="Wood A.P."/>
            <person name="Kelly D.P."/>
        </authorList>
    </citation>
    <scope>NUCLEOTIDE SEQUENCE [LARGE SCALE GENOMIC DNA]</scope>
    <source>
        <strain>ATCC 25259 / T1</strain>
    </source>
</reference>
<name>RLMH_THIDA</name>
<proteinExistence type="inferred from homology"/>